<feature type="chain" id="PRO_0000061851" description="Cytochrome b6-f complex subunit 4">
    <location>
        <begin position="1"/>
        <end position="160"/>
    </location>
</feature>
<feature type="transmembrane region" description="Helical" evidence="2">
    <location>
        <begin position="36"/>
        <end position="56"/>
    </location>
</feature>
<feature type="transmembrane region" description="Helical" evidence="2">
    <location>
        <begin position="96"/>
        <end position="116"/>
    </location>
</feature>
<feature type="transmembrane region" description="Helical" evidence="2">
    <location>
        <begin position="131"/>
        <end position="151"/>
    </location>
</feature>
<reference key="1">
    <citation type="journal article" date="1989" name="Plant Mol. Biol.">
        <title>Nucleotide sequence of the plastid genes for apocytochrome b6 (petB) and subunit IV of the cytochrome b6-f complex (petD) from the green alga Chlorella protothecoides: lack of introns.</title>
        <authorList>
            <person name="Reimann A."/>
            <person name="Kueck U."/>
        </authorList>
    </citation>
    <scope>NUCLEOTIDE SEQUENCE [GENOMIC DNA]</scope>
    <source>
        <strain>ATCC 30407 / UTEX 25 / SAG 211-7A</strain>
    </source>
</reference>
<gene>
    <name evidence="2" type="primary">petD</name>
</gene>
<evidence type="ECO:0000250" key="1"/>
<evidence type="ECO:0000255" key="2">
    <source>
        <dbReference type="HAMAP-Rule" id="MF_01344"/>
    </source>
</evidence>
<sequence length="160" mass="17432">MAVTKKPDLSDPQLRAKLAKGMGHNYYGEPAWPNDIFYMFPVVIFGTFAGVIGLAVLDPAAIGEPANPFATPLEILPEWYFYPVFQLLRTVPNKLLGVLLMAAVPAGLITVPFIKIYNKFQNPFRRPVATTVFLVGTVAAIWLGIGAALPIDISLTLGLF</sequence>
<protein>
    <recommendedName>
        <fullName evidence="2">Cytochrome b6-f complex subunit 4</fullName>
    </recommendedName>
    <alternativeName>
        <fullName evidence="2">17 kDa polypeptide</fullName>
    </alternativeName>
</protein>
<proteinExistence type="inferred from homology"/>
<name>PETD_AUXPR</name>
<comment type="function">
    <text evidence="2">Component of the cytochrome b6-f complex, which mediates electron transfer between photosystem II (PSII) and photosystem I (PSI), cyclic electron flow around PSI, and state transitions.</text>
</comment>
<comment type="subunit">
    <text evidence="1">The 4 large subunits of the cytochrome b6-f complex are cytochrome b6, subunit IV (17 kDa polypeptide, petD), cytochrome f and the Rieske protein, while the 4 small subunits are petG, petL, petM and petN. The complex functions as a dimer (By similarity).</text>
</comment>
<comment type="subcellular location">
    <subcellularLocation>
        <location evidence="2">Plastid</location>
        <location evidence="2">Chloroplast thylakoid membrane</location>
        <topology evidence="2">Multi-pass membrane protein</topology>
    </subcellularLocation>
</comment>
<comment type="similarity">
    <text evidence="2">Belongs to the cytochrome b family. PetD subfamily.</text>
</comment>
<dbReference type="EMBL" id="X15244">
    <property type="protein sequence ID" value="CAA33323.1"/>
    <property type="molecule type" value="Genomic_DNA"/>
</dbReference>
<dbReference type="PIR" id="S06160">
    <property type="entry name" value="WMKL17"/>
</dbReference>
<dbReference type="SMR" id="P13348"/>
<dbReference type="GO" id="GO:0009535">
    <property type="term" value="C:chloroplast thylakoid membrane"/>
    <property type="evidence" value="ECO:0007669"/>
    <property type="project" value="UniProtKB-SubCell"/>
</dbReference>
<dbReference type="GO" id="GO:0045158">
    <property type="term" value="F:electron transporter, transferring electrons within cytochrome b6/f complex of photosystem II activity"/>
    <property type="evidence" value="ECO:0007669"/>
    <property type="project" value="UniProtKB-UniRule"/>
</dbReference>
<dbReference type="GO" id="GO:0045156">
    <property type="term" value="F:electron transporter, transferring electrons within the cyclic electron transport pathway of photosynthesis activity"/>
    <property type="evidence" value="ECO:0007669"/>
    <property type="project" value="InterPro"/>
</dbReference>
<dbReference type="GO" id="GO:0016491">
    <property type="term" value="F:oxidoreductase activity"/>
    <property type="evidence" value="ECO:0007669"/>
    <property type="project" value="InterPro"/>
</dbReference>
<dbReference type="GO" id="GO:0009767">
    <property type="term" value="P:photosynthetic electron transport chain"/>
    <property type="evidence" value="ECO:0007669"/>
    <property type="project" value="InterPro"/>
</dbReference>
<dbReference type="CDD" id="cd00290">
    <property type="entry name" value="cytochrome_b_C"/>
    <property type="match status" value="1"/>
</dbReference>
<dbReference type="FunFam" id="1.10.287.980:FF:000001">
    <property type="entry name" value="Cytochrome b6-f complex subunit 4"/>
    <property type="match status" value="1"/>
</dbReference>
<dbReference type="FunFam" id="1.20.5.510:FF:000002">
    <property type="entry name" value="Cytochrome b6-f complex subunit 4"/>
    <property type="match status" value="1"/>
</dbReference>
<dbReference type="Gene3D" id="1.10.287.980">
    <property type="entry name" value="plastocyanin oxidoreductase"/>
    <property type="match status" value="1"/>
</dbReference>
<dbReference type="Gene3D" id="1.20.5.510">
    <property type="entry name" value="Single helix bin"/>
    <property type="match status" value="1"/>
</dbReference>
<dbReference type="HAMAP" id="MF_01344">
    <property type="entry name" value="Cytb6_f_subIV"/>
    <property type="match status" value="1"/>
</dbReference>
<dbReference type="InterPro" id="IPR005798">
    <property type="entry name" value="Cyt_b/b6_C"/>
</dbReference>
<dbReference type="InterPro" id="IPR036150">
    <property type="entry name" value="Cyt_b/b6_C_sf"/>
</dbReference>
<dbReference type="InterPro" id="IPR005870">
    <property type="entry name" value="Cyt_b6/f_cplx_suIV"/>
</dbReference>
<dbReference type="InterPro" id="IPR048260">
    <property type="entry name" value="Cytochrome_b_C_euk/bac"/>
</dbReference>
<dbReference type="NCBIfam" id="TIGR01156">
    <property type="entry name" value="cytb6_f_IV"/>
    <property type="match status" value="1"/>
</dbReference>
<dbReference type="PANTHER" id="PTHR19271">
    <property type="entry name" value="CYTOCHROME B"/>
    <property type="match status" value="1"/>
</dbReference>
<dbReference type="PANTHER" id="PTHR19271:SF16">
    <property type="entry name" value="CYTOCHROME B"/>
    <property type="match status" value="1"/>
</dbReference>
<dbReference type="Pfam" id="PF00032">
    <property type="entry name" value="Cytochrom_B_C"/>
    <property type="match status" value="1"/>
</dbReference>
<dbReference type="PIRSF" id="PIRSF000033">
    <property type="entry name" value="B6f_17K"/>
    <property type="match status" value="1"/>
</dbReference>
<dbReference type="SUPFAM" id="SSF81648">
    <property type="entry name" value="a domain/subunit of cytochrome bc1 complex (Ubiquinol-cytochrome c reductase)"/>
    <property type="match status" value="1"/>
</dbReference>
<dbReference type="PROSITE" id="PS51003">
    <property type="entry name" value="CYTB_CTER"/>
    <property type="match status" value="1"/>
</dbReference>
<geneLocation type="chloroplast"/>
<keyword id="KW-0150">Chloroplast</keyword>
<keyword id="KW-0249">Electron transport</keyword>
<keyword id="KW-0472">Membrane</keyword>
<keyword id="KW-0602">Photosynthesis</keyword>
<keyword id="KW-0934">Plastid</keyword>
<keyword id="KW-0793">Thylakoid</keyword>
<keyword id="KW-0812">Transmembrane</keyword>
<keyword id="KW-1133">Transmembrane helix</keyword>
<keyword id="KW-0813">Transport</keyword>
<accession>P13348</accession>
<organism>
    <name type="scientific">Auxenochlorella protothecoides</name>
    <name type="common">Green microalga</name>
    <name type="synonym">Chlorella protothecoides</name>
    <dbReference type="NCBI Taxonomy" id="3075"/>
    <lineage>
        <taxon>Eukaryota</taxon>
        <taxon>Viridiplantae</taxon>
        <taxon>Chlorophyta</taxon>
        <taxon>core chlorophytes</taxon>
        <taxon>Trebouxiophyceae</taxon>
        <taxon>Chlorellales</taxon>
        <taxon>Chlorellaceae</taxon>
        <taxon>Auxenochlorella</taxon>
    </lineage>
</organism>